<feature type="chain" id="PRO_0000184076" description="Putative endoglucanase X">
    <location>
        <begin position="1" status="less than"/>
        <end position="224"/>
    </location>
</feature>
<feature type="domain" description="Dockerin" evidence="1">
    <location>
        <begin position="162"/>
        <end position="224"/>
    </location>
</feature>
<feature type="region of interest" description="Disordered" evidence="2">
    <location>
        <begin position="147"/>
        <end position="168"/>
    </location>
</feature>
<feature type="non-terminal residue">
    <location>
        <position position="1"/>
    </location>
</feature>
<dbReference type="EC" id="3.2.1.4"/>
<dbReference type="EMBL" id="M22759">
    <property type="protein sequence ID" value="AAA23223.1"/>
    <property type="molecule type" value="Genomic_DNA"/>
</dbReference>
<dbReference type="PIR" id="A30476">
    <property type="entry name" value="A30476"/>
</dbReference>
<dbReference type="PDB" id="2VPT">
    <property type="method" value="X-ray"/>
    <property type="resolution" value="1.40 A"/>
    <property type="chains" value="A=9-149"/>
</dbReference>
<dbReference type="PDBsum" id="2VPT"/>
<dbReference type="SMR" id="P15329"/>
<dbReference type="GO" id="GO:0008810">
    <property type="term" value="F:cellulase activity"/>
    <property type="evidence" value="ECO:0007669"/>
    <property type="project" value="UniProtKB-EC"/>
</dbReference>
<dbReference type="GO" id="GO:0004622">
    <property type="term" value="F:lysophospholipase activity"/>
    <property type="evidence" value="ECO:0007669"/>
    <property type="project" value="TreeGrafter"/>
</dbReference>
<dbReference type="GO" id="GO:0030245">
    <property type="term" value="P:cellulose catabolic process"/>
    <property type="evidence" value="ECO:0007669"/>
    <property type="project" value="UniProtKB-KW"/>
</dbReference>
<dbReference type="CDD" id="cd14256">
    <property type="entry name" value="Dockerin_I"/>
    <property type="match status" value="1"/>
</dbReference>
<dbReference type="CDD" id="cd01833">
    <property type="entry name" value="XynB_like"/>
    <property type="match status" value="1"/>
</dbReference>
<dbReference type="Gene3D" id="1.10.1330.10">
    <property type="entry name" value="Dockerin domain"/>
    <property type="match status" value="1"/>
</dbReference>
<dbReference type="Gene3D" id="3.40.50.1110">
    <property type="entry name" value="SGNH hydrolase"/>
    <property type="match status" value="1"/>
</dbReference>
<dbReference type="InterPro" id="IPR002105">
    <property type="entry name" value="Dockerin_1_rpt"/>
</dbReference>
<dbReference type="InterPro" id="IPR016134">
    <property type="entry name" value="Dockerin_dom"/>
</dbReference>
<dbReference type="InterPro" id="IPR036439">
    <property type="entry name" value="Dockerin_dom_sf"/>
</dbReference>
<dbReference type="InterPro" id="IPR018247">
    <property type="entry name" value="EF_Hand_1_Ca_BS"/>
</dbReference>
<dbReference type="InterPro" id="IPR051532">
    <property type="entry name" value="Ester_Hydrolysis_Enzymes"/>
</dbReference>
<dbReference type="InterPro" id="IPR013830">
    <property type="entry name" value="SGNH_hydro"/>
</dbReference>
<dbReference type="InterPro" id="IPR036514">
    <property type="entry name" value="SGNH_hydro_sf"/>
</dbReference>
<dbReference type="PANTHER" id="PTHR30383:SF5">
    <property type="entry name" value="SGNH HYDROLASE-TYPE ESTERASE DOMAIN-CONTAINING PROTEIN"/>
    <property type="match status" value="1"/>
</dbReference>
<dbReference type="PANTHER" id="PTHR30383">
    <property type="entry name" value="THIOESTERASE 1/PROTEASE 1/LYSOPHOSPHOLIPASE L1"/>
    <property type="match status" value="1"/>
</dbReference>
<dbReference type="Pfam" id="PF00404">
    <property type="entry name" value="Dockerin_1"/>
    <property type="match status" value="1"/>
</dbReference>
<dbReference type="Pfam" id="PF13472">
    <property type="entry name" value="Lipase_GDSL_2"/>
    <property type="match status" value="1"/>
</dbReference>
<dbReference type="SUPFAM" id="SSF52266">
    <property type="entry name" value="SGNH hydrolase"/>
    <property type="match status" value="1"/>
</dbReference>
<dbReference type="SUPFAM" id="SSF63446">
    <property type="entry name" value="Type I dockerin domain"/>
    <property type="match status" value="1"/>
</dbReference>
<dbReference type="PROSITE" id="PS00448">
    <property type="entry name" value="CLOS_CELLULOSOME_RPT"/>
    <property type="match status" value="2"/>
</dbReference>
<dbReference type="PROSITE" id="PS51766">
    <property type="entry name" value="DOCKERIN"/>
    <property type="match status" value="1"/>
</dbReference>
<dbReference type="PROSITE" id="PS00018">
    <property type="entry name" value="EF_HAND_1"/>
    <property type="match status" value="1"/>
</dbReference>
<sequence>IMKVTQDGSIPQIASNINNWLNTHNPDVVFLWIGGNDLLLSGNVNATGLSNLIDQIFTVKPNVTLFVADYYPWPEAVKQYNAVIPGIVQQKANAGKKVYFVKLSEIQFDRNTDISWDGLHLSEIGYTKIANIWYKYTIDILKALAGQTQPTPSPSPTPTDSPLVKKGDVNLDGQVNSTDFSLLKRYILKVVDINSINVTNADMNNDGNINSTDISILKRILLRN</sequence>
<accession>P15329</accession>
<protein>
    <recommendedName>
        <fullName>Putative endoglucanase X</fullName>
        <shortName>EGX</shortName>
        <ecNumber>3.2.1.4</ecNumber>
    </recommendedName>
    <alternativeName>
        <fullName>Cellulase</fullName>
    </alternativeName>
    <alternativeName>
        <fullName>Endo-1,4-beta-glucanase</fullName>
    </alternativeName>
</protein>
<proteinExistence type="evidence at protein level"/>
<name>GUNX_ACETH</name>
<evidence type="ECO:0000255" key="1">
    <source>
        <dbReference type="PROSITE-ProRule" id="PRU01102"/>
    </source>
</evidence>
<evidence type="ECO:0000256" key="2">
    <source>
        <dbReference type="SAM" id="MobiDB-lite"/>
    </source>
</evidence>
<organism>
    <name type="scientific">Acetivibrio thermocellus</name>
    <name type="common">Hungateiclostridium thermocellum</name>
    <name type="synonym">Clostridium thermocellum</name>
    <dbReference type="NCBI Taxonomy" id="1515"/>
    <lineage>
        <taxon>Bacteria</taxon>
        <taxon>Bacillati</taxon>
        <taxon>Bacillota</taxon>
        <taxon>Clostridia</taxon>
        <taxon>Eubacteriales</taxon>
        <taxon>Oscillospiraceae</taxon>
        <taxon>Acetivibrio</taxon>
    </lineage>
</organism>
<comment type="function">
    <text>This enzyme catalyzes the endohydrolysis of 1,4-beta-glucosidic linkages in cellulose, lichenin and cereal beta-D-glucans.</text>
</comment>
<comment type="catalytic activity">
    <reaction>
        <text>Endohydrolysis of (1-&gt;4)-beta-D-glucosidic linkages in cellulose, lichenin and cereal beta-D-glucans.</text>
        <dbReference type="EC" id="3.2.1.4"/>
    </reaction>
</comment>
<keyword id="KW-0002">3D-structure</keyword>
<keyword id="KW-0119">Carbohydrate metabolism</keyword>
<keyword id="KW-0136">Cellulose degradation</keyword>
<keyword id="KW-0326">Glycosidase</keyword>
<keyword id="KW-0378">Hydrolase</keyword>
<keyword id="KW-0624">Polysaccharide degradation</keyword>
<gene>
    <name type="primary">celX</name>
</gene>
<reference key="1">
    <citation type="journal article" date="1988" name="Gene">
        <title>Conserved reiterated domains in Clostridium thermocellum endoglucanases are not essential for catalytic activity.</title>
        <authorList>
            <person name="Hall J."/>
            <person name="Hazlewood G.P."/>
            <person name="Barker P.J."/>
            <person name="Gilbert H.J."/>
        </authorList>
    </citation>
    <scope>NUCLEOTIDE SEQUENCE [GENOMIC DNA]</scope>
</reference>